<dbReference type="EMBL" id="AK075979">
    <property type="protein sequence ID" value="BAC36092.1"/>
    <property type="molecule type" value="mRNA"/>
</dbReference>
<dbReference type="EMBL" id="AK077324">
    <property type="protein sequence ID" value="BAC36750.1"/>
    <property type="molecule type" value="mRNA"/>
</dbReference>
<dbReference type="EMBL" id="AK153033">
    <property type="protein sequence ID" value="BAE31665.1"/>
    <property type="molecule type" value="mRNA"/>
</dbReference>
<dbReference type="EMBL" id="AK162075">
    <property type="protein sequence ID" value="BAE36712.1"/>
    <property type="molecule type" value="mRNA"/>
</dbReference>
<dbReference type="EMBL" id="BC014686">
    <property type="protein sequence ID" value="AAH14686.2"/>
    <property type="molecule type" value="mRNA"/>
</dbReference>
<dbReference type="EMBL" id="BC023787">
    <property type="protein sequence ID" value="AAH23787.1"/>
    <property type="molecule type" value="mRNA"/>
</dbReference>
<dbReference type="EMBL" id="BC027012">
    <property type="protein sequence ID" value="AAH27012.1"/>
    <property type="molecule type" value="mRNA"/>
</dbReference>
<dbReference type="CCDS" id="CCDS26844.1"/>
<dbReference type="RefSeq" id="NP_598842.1">
    <property type="nucleotide sequence ID" value="NM_134081.6"/>
</dbReference>
<dbReference type="SMR" id="Q91WN1"/>
<dbReference type="BioGRID" id="224364">
    <property type="interactions" value="8"/>
</dbReference>
<dbReference type="FunCoup" id="Q91WN1">
    <property type="interactions" value="2491"/>
</dbReference>
<dbReference type="IntAct" id="Q91WN1">
    <property type="interactions" value="5"/>
</dbReference>
<dbReference type="STRING" id="10090.ENSMUSP00000022345"/>
<dbReference type="GlyGen" id="Q91WN1">
    <property type="glycosylation" value="1 site, 1 O-linked glycan (1 site)"/>
</dbReference>
<dbReference type="iPTMnet" id="Q91WN1"/>
<dbReference type="PhosphoSitePlus" id="Q91WN1"/>
<dbReference type="REPRODUCTION-2DPAGE" id="Q91WN1"/>
<dbReference type="jPOST" id="Q91WN1"/>
<dbReference type="PaxDb" id="10090-ENSMUSP00000022345"/>
<dbReference type="PeptideAtlas" id="Q91WN1"/>
<dbReference type="ProteomicsDB" id="279461"/>
<dbReference type="Pumba" id="Q91WN1"/>
<dbReference type="Antibodypedia" id="29351">
    <property type="antibodies" value="139 antibodies from 26 providers"/>
</dbReference>
<dbReference type="DNASU" id="108671"/>
<dbReference type="Ensembl" id="ENSMUST00000022345.7">
    <property type="protein sequence ID" value="ENSMUSP00000022345.7"/>
    <property type="gene ID" value="ENSMUSG00000021811.8"/>
</dbReference>
<dbReference type="GeneID" id="108671"/>
<dbReference type="KEGG" id="mmu:108671"/>
<dbReference type="UCSC" id="uc007sjn.2">
    <property type="organism name" value="mouse"/>
</dbReference>
<dbReference type="AGR" id="MGI:1915326"/>
<dbReference type="CTD" id="23234"/>
<dbReference type="MGI" id="MGI:1915326">
    <property type="gene designation" value="Dnajc9"/>
</dbReference>
<dbReference type="VEuPathDB" id="HostDB:ENSMUSG00000021811"/>
<dbReference type="eggNOG" id="KOG0719">
    <property type="taxonomic scope" value="Eukaryota"/>
</dbReference>
<dbReference type="GeneTree" id="ENSGT00390000014549"/>
<dbReference type="HOGENOM" id="CLU_055868_1_0_1"/>
<dbReference type="InParanoid" id="Q91WN1"/>
<dbReference type="OMA" id="WLDLWSK"/>
<dbReference type="OrthoDB" id="110024at2759"/>
<dbReference type="PhylomeDB" id="Q91WN1"/>
<dbReference type="TreeFam" id="TF105168"/>
<dbReference type="BioGRID-ORCS" id="108671">
    <property type="hits" value="24 hits in 75 CRISPR screens"/>
</dbReference>
<dbReference type="PRO" id="PR:Q91WN1"/>
<dbReference type="Proteomes" id="UP000000589">
    <property type="component" value="Chromosome 14"/>
</dbReference>
<dbReference type="RNAct" id="Q91WN1">
    <property type="molecule type" value="protein"/>
</dbReference>
<dbReference type="Bgee" id="ENSMUSG00000021811">
    <property type="expression patterns" value="Expressed in embryonic post-anal tail and 131 other cell types or tissues"/>
</dbReference>
<dbReference type="GO" id="GO:0005829">
    <property type="term" value="C:cytosol"/>
    <property type="evidence" value="ECO:0007669"/>
    <property type="project" value="Ensembl"/>
</dbReference>
<dbReference type="GO" id="GO:0005615">
    <property type="term" value="C:extracellular space"/>
    <property type="evidence" value="ECO:0007669"/>
    <property type="project" value="Ensembl"/>
</dbReference>
<dbReference type="GO" id="GO:0005654">
    <property type="term" value="C:nucleoplasm"/>
    <property type="evidence" value="ECO:0007669"/>
    <property type="project" value="Ensembl"/>
</dbReference>
<dbReference type="GO" id="GO:0005886">
    <property type="term" value="C:plasma membrane"/>
    <property type="evidence" value="ECO:0007669"/>
    <property type="project" value="UniProtKB-SubCell"/>
</dbReference>
<dbReference type="GO" id="GO:0101031">
    <property type="term" value="C:protein folding chaperone complex"/>
    <property type="evidence" value="ECO:0000250"/>
    <property type="project" value="UniProtKB"/>
</dbReference>
<dbReference type="GO" id="GO:0031072">
    <property type="term" value="F:heat shock protein binding"/>
    <property type="evidence" value="ECO:0007669"/>
    <property type="project" value="Ensembl"/>
</dbReference>
<dbReference type="GO" id="GO:0042393">
    <property type="term" value="F:histone binding"/>
    <property type="evidence" value="ECO:0000250"/>
    <property type="project" value="UniProtKB"/>
</dbReference>
<dbReference type="GO" id="GO:0051087">
    <property type="term" value="F:protein-folding chaperone binding"/>
    <property type="evidence" value="ECO:0000250"/>
    <property type="project" value="UniProtKB"/>
</dbReference>
<dbReference type="GO" id="GO:0006334">
    <property type="term" value="P:nucleosome assembly"/>
    <property type="evidence" value="ECO:0000250"/>
    <property type="project" value="UniProtKB"/>
</dbReference>
<dbReference type="CDD" id="cd06257">
    <property type="entry name" value="DnaJ"/>
    <property type="match status" value="1"/>
</dbReference>
<dbReference type="FunFam" id="1.10.287.110:FF:000035">
    <property type="entry name" value="DnaJ homolog subfamily C member 9"/>
    <property type="match status" value="1"/>
</dbReference>
<dbReference type="Gene3D" id="1.10.287.110">
    <property type="entry name" value="DnaJ domain"/>
    <property type="match status" value="1"/>
</dbReference>
<dbReference type="InterPro" id="IPR001623">
    <property type="entry name" value="DnaJ_domain"/>
</dbReference>
<dbReference type="InterPro" id="IPR018253">
    <property type="entry name" value="DnaJ_domain_CS"/>
</dbReference>
<dbReference type="InterPro" id="IPR056453">
    <property type="entry name" value="HTH_DNAJC9"/>
</dbReference>
<dbReference type="InterPro" id="IPR036869">
    <property type="entry name" value="J_dom_sf"/>
</dbReference>
<dbReference type="InterPro" id="IPR052594">
    <property type="entry name" value="J_domain-containing_protein"/>
</dbReference>
<dbReference type="PANTHER" id="PTHR44144">
    <property type="entry name" value="DNAJ HOMOLOG SUBFAMILY C MEMBER 9"/>
    <property type="match status" value="1"/>
</dbReference>
<dbReference type="PANTHER" id="PTHR44144:SF1">
    <property type="entry name" value="DNAJ HOMOLOG SUBFAMILY C MEMBER 9"/>
    <property type="match status" value="1"/>
</dbReference>
<dbReference type="Pfam" id="PF00226">
    <property type="entry name" value="DnaJ"/>
    <property type="match status" value="1"/>
</dbReference>
<dbReference type="Pfam" id="PF23302">
    <property type="entry name" value="HTH_DNAJC9"/>
    <property type="match status" value="1"/>
</dbReference>
<dbReference type="PRINTS" id="PR00625">
    <property type="entry name" value="JDOMAIN"/>
</dbReference>
<dbReference type="SMART" id="SM00271">
    <property type="entry name" value="DnaJ"/>
    <property type="match status" value="1"/>
</dbReference>
<dbReference type="SUPFAM" id="SSF46565">
    <property type="entry name" value="Chaperone J-domain"/>
    <property type="match status" value="1"/>
</dbReference>
<dbReference type="PROSITE" id="PS00636">
    <property type="entry name" value="DNAJ_1"/>
    <property type="match status" value="1"/>
</dbReference>
<dbReference type="PROSITE" id="PS50076">
    <property type="entry name" value="DNAJ_2"/>
    <property type="match status" value="1"/>
</dbReference>
<reference key="1">
    <citation type="journal article" date="2005" name="Science">
        <title>The transcriptional landscape of the mammalian genome.</title>
        <authorList>
            <person name="Carninci P."/>
            <person name="Kasukawa T."/>
            <person name="Katayama S."/>
            <person name="Gough J."/>
            <person name="Frith M.C."/>
            <person name="Maeda N."/>
            <person name="Oyama R."/>
            <person name="Ravasi T."/>
            <person name="Lenhard B."/>
            <person name="Wells C."/>
            <person name="Kodzius R."/>
            <person name="Shimokawa K."/>
            <person name="Bajic V.B."/>
            <person name="Brenner S.E."/>
            <person name="Batalov S."/>
            <person name="Forrest A.R."/>
            <person name="Zavolan M."/>
            <person name="Davis M.J."/>
            <person name="Wilming L.G."/>
            <person name="Aidinis V."/>
            <person name="Allen J.E."/>
            <person name="Ambesi-Impiombato A."/>
            <person name="Apweiler R."/>
            <person name="Aturaliya R.N."/>
            <person name="Bailey T.L."/>
            <person name="Bansal M."/>
            <person name="Baxter L."/>
            <person name="Beisel K.W."/>
            <person name="Bersano T."/>
            <person name="Bono H."/>
            <person name="Chalk A.M."/>
            <person name="Chiu K.P."/>
            <person name="Choudhary V."/>
            <person name="Christoffels A."/>
            <person name="Clutterbuck D.R."/>
            <person name="Crowe M.L."/>
            <person name="Dalla E."/>
            <person name="Dalrymple B.P."/>
            <person name="de Bono B."/>
            <person name="Della Gatta G."/>
            <person name="di Bernardo D."/>
            <person name="Down T."/>
            <person name="Engstrom P."/>
            <person name="Fagiolini M."/>
            <person name="Faulkner G."/>
            <person name="Fletcher C.F."/>
            <person name="Fukushima T."/>
            <person name="Furuno M."/>
            <person name="Futaki S."/>
            <person name="Gariboldi M."/>
            <person name="Georgii-Hemming P."/>
            <person name="Gingeras T.R."/>
            <person name="Gojobori T."/>
            <person name="Green R.E."/>
            <person name="Gustincich S."/>
            <person name="Harbers M."/>
            <person name="Hayashi Y."/>
            <person name="Hensch T.K."/>
            <person name="Hirokawa N."/>
            <person name="Hill D."/>
            <person name="Huminiecki L."/>
            <person name="Iacono M."/>
            <person name="Ikeo K."/>
            <person name="Iwama A."/>
            <person name="Ishikawa T."/>
            <person name="Jakt M."/>
            <person name="Kanapin A."/>
            <person name="Katoh M."/>
            <person name="Kawasawa Y."/>
            <person name="Kelso J."/>
            <person name="Kitamura H."/>
            <person name="Kitano H."/>
            <person name="Kollias G."/>
            <person name="Krishnan S.P."/>
            <person name="Kruger A."/>
            <person name="Kummerfeld S.K."/>
            <person name="Kurochkin I.V."/>
            <person name="Lareau L.F."/>
            <person name="Lazarevic D."/>
            <person name="Lipovich L."/>
            <person name="Liu J."/>
            <person name="Liuni S."/>
            <person name="McWilliam S."/>
            <person name="Madan Babu M."/>
            <person name="Madera M."/>
            <person name="Marchionni L."/>
            <person name="Matsuda H."/>
            <person name="Matsuzawa S."/>
            <person name="Miki H."/>
            <person name="Mignone F."/>
            <person name="Miyake S."/>
            <person name="Morris K."/>
            <person name="Mottagui-Tabar S."/>
            <person name="Mulder N."/>
            <person name="Nakano N."/>
            <person name="Nakauchi H."/>
            <person name="Ng P."/>
            <person name="Nilsson R."/>
            <person name="Nishiguchi S."/>
            <person name="Nishikawa S."/>
            <person name="Nori F."/>
            <person name="Ohara O."/>
            <person name="Okazaki Y."/>
            <person name="Orlando V."/>
            <person name="Pang K.C."/>
            <person name="Pavan W.J."/>
            <person name="Pavesi G."/>
            <person name="Pesole G."/>
            <person name="Petrovsky N."/>
            <person name="Piazza S."/>
            <person name="Reed J."/>
            <person name="Reid J.F."/>
            <person name="Ring B.Z."/>
            <person name="Ringwald M."/>
            <person name="Rost B."/>
            <person name="Ruan Y."/>
            <person name="Salzberg S.L."/>
            <person name="Sandelin A."/>
            <person name="Schneider C."/>
            <person name="Schoenbach C."/>
            <person name="Sekiguchi K."/>
            <person name="Semple C.A."/>
            <person name="Seno S."/>
            <person name="Sessa L."/>
            <person name="Sheng Y."/>
            <person name="Shibata Y."/>
            <person name="Shimada H."/>
            <person name="Shimada K."/>
            <person name="Silva D."/>
            <person name="Sinclair B."/>
            <person name="Sperling S."/>
            <person name="Stupka E."/>
            <person name="Sugiura K."/>
            <person name="Sultana R."/>
            <person name="Takenaka Y."/>
            <person name="Taki K."/>
            <person name="Tammoja K."/>
            <person name="Tan S.L."/>
            <person name="Tang S."/>
            <person name="Taylor M.S."/>
            <person name="Tegner J."/>
            <person name="Teichmann S.A."/>
            <person name="Ueda H.R."/>
            <person name="van Nimwegen E."/>
            <person name="Verardo R."/>
            <person name="Wei C.L."/>
            <person name="Yagi K."/>
            <person name="Yamanishi H."/>
            <person name="Zabarovsky E."/>
            <person name="Zhu S."/>
            <person name="Zimmer A."/>
            <person name="Hide W."/>
            <person name="Bult C."/>
            <person name="Grimmond S.M."/>
            <person name="Teasdale R.D."/>
            <person name="Liu E.T."/>
            <person name="Brusic V."/>
            <person name="Quackenbush J."/>
            <person name="Wahlestedt C."/>
            <person name="Mattick J.S."/>
            <person name="Hume D.A."/>
            <person name="Kai C."/>
            <person name="Sasaki D."/>
            <person name="Tomaru Y."/>
            <person name="Fukuda S."/>
            <person name="Kanamori-Katayama M."/>
            <person name="Suzuki M."/>
            <person name="Aoki J."/>
            <person name="Arakawa T."/>
            <person name="Iida J."/>
            <person name="Imamura K."/>
            <person name="Itoh M."/>
            <person name="Kato T."/>
            <person name="Kawaji H."/>
            <person name="Kawagashira N."/>
            <person name="Kawashima T."/>
            <person name="Kojima M."/>
            <person name="Kondo S."/>
            <person name="Konno H."/>
            <person name="Nakano K."/>
            <person name="Ninomiya N."/>
            <person name="Nishio T."/>
            <person name="Okada M."/>
            <person name="Plessy C."/>
            <person name="Shibata K."/>
            <person name="Shiraki T."/>
            <person name="Suzuki S."/>
            <person name="Tagami M."/>
            <person name="Waki K."/>
            <person name="Watahiki A."/>
            <person name="Okamura-Oho Y."/>
            <person name="Suzuki H."/>
            <person name="Kawai J."/>
            <person name="Hayashizaki Y."/>
        </authorList>
    </citation>
    <scope>NUCLEOTIDE SEQUENCE [LARGE SCALE MRNA]</scope>
    <source>
        <strain>C57BL/6J</strain>
        <tissue>Bone marrow</tissue>
        <tissue>Egg</tissue>
        <tissue>Pituitary</tissue>
    </source>
</reference>
<reference key="2">
    <citation type="journal article" date="2004" name="Genome Res.">
        <title>The status, quality, and expansion of the NIH full-length cDNA project: the Mammalian Gene Collection (MGC).</title>
        <authorList>
            <consortium name="The MGC Project Team"/>
        </authorList>
    </citation>
    <scope>NUCLEOTIDE SEQUENCE [LARGE SCALE MRNA]</scope>
    <source>
        <strain>FVB/N</strain>
        <tissue>Eye</tissue>
        <tissue>Mammary tumor</tissue>
    </source>
</reference>
<reference key="3">
    <citation type="journal article" date="2010" name="Cell">
        <title>A tissue-specific atlas of mouse protein phosphorylation and expression.</title>
        <authorList>
            <person name="Huttlin E.L."/>
            <person name="Jedrychowski M.P."/>
            <person name="Elias J.E."/>
            <person name="Goswami T."/>
            <person name="Rad R."/>
            <person name="Beausoleil S.A."/>
            <person name="Villen J."/>
            <person name="Haas W."/>
            <person name="Sowa M.E."/>
            <person name="Gygi S.P."/>
        </authorList>
    </citation>
    <scope>PHOSPHORYLATION [LARGE SCALE ANALYSIS] AT SER-109</scope>
    <scope>IDENTIFICATION BY MASS SPECTROMETRY [LARGE SCALE ANALYSIS]</scope>
    <source>
        <tissue>Brain</tissue>
        <tissue>Kidney</tissue>
        <tissue>Lung</tissue>
        <tissue>Pancreas</tissue>
        <tissue>Spleen</tissue>
        <tissue>Testis</tissue>
    </source>
</reference>
<name>DNJC9_MOUSE</name>
<accession>Q91WN1</accession>
<accession>Q3TSG3</accession>
<accession>Q8R0E3</accession>
<organism>
    <name type="scientific">Mus musculus</name>
    <name type="common">Mouse</name>
    <dbReference type="NCBI Taxonomy" id="10090"/>
    <lineage>
        <taxon>Eukaryota</taxon>
        <taxon>Metazoa</taxon>
        <taxon>Chordata</taxon>
        <taxon>Craniata</taxon>
        <taxon>Vertebrata</taxon>
        <taxon>Euteleostomi</taxon>
        <taxon>Mammalia</taxon>
        <taxon>Eutheria</taxon>
        <taxon>Euarchontoglires</taxon>
        <taxon>Glires</taxon>
        <taxon>Rodentia</taxon>
        <taxon>Myomorpha</taxon>
        <taxon>Muroidea</taxon>
        <taxon>Muridae</taxon>
        <taxon>Murinae</taxon>
        <taxon>Mus</taxon>
        <taxon>Mus</taxon>
    </lineage>
</organism>
<feature type="chain" id="PRO_0000071064" description="DnaJ homolog subfamily C member 9">
    <location>
        <begin position="1"/>
        <end position="259"/>
    </location>
</feature>
<feature type="domain" description="J" evidence="2">
    <location>
        <begin position="15"/>
        <end position="82"/>
    </location>
</feature>
<feature type="region of interest" description="Required for histone binding" evidence="1">
    <location>
        <begin position="171"/>
        <end position="248"/>
    </location>
</feature>
<feature type="modified residue" description="Phosphoserine" evidence="3">
    <location>
        <position position="109"/>
    </location>
</feature>
<keyword id="KW-1003">Cell membrane</keyword>
<keyword id="KW-0143">Chaperone</keyword>
<keyword id="KW-0963">Cytoplasm</keyword>
<keyword id="KW-0472">Membrane</keyword>
<keyword id="KW-0539">Nucleus</keyword>
<keyword id="KW-0597">Phosphoprotein</keyword>
<keyword id="KW-1185">Reference proteome</keyword>
<proteinExistence type="evidence at protein level"/>
<comment type="function">
    <text evidence="1">Acts as a dual histone chaperone and heat shock co-chaperone (By similarity). As a histone chaperone, forms a co-chaperone complex with MCM2 and histone H3-H4 heterodimers; and may thereby assist MCM2 in histone H3-H4 heterodimer recognition and facilitate the assembly of histones into nucleosomes (By similarity). May also act as a histone co-chaperone together with TONSL (By similarity). May recruit histone chaperones ASF1A, NASP and SPT2 to histone H3-H4 heterodimers (By similarity). Also plays a role as co-chaperone of the HSP70 family of molecular chaperone proteins, such as HSPA1A, HSPA1B and HSPA8 (By similarity). As a co-chaperone, may play a role in the recruitment of HSP70-type molecular chaperone machinery to histone H3-H4 substrates, thereby maintaining the histone structural integrity (By similarity). Exhibits activity to assemble histones onto DNA in vitro (By similarity).</text>
</comment>
<comment type="subunit">
    <text evidence="1">Forms a co-chaperone complex with MCM2 and histone H3.3-H4 dimers (By similarity). Within the complex, interacts (via C-terminus) with MCM2 (via N-terminus); the interaction is histone-dependent (By similarity). Within the complex, interacts (via C-terminus) with histone H3.3-H4 heterodimers; the interaction is direct (By similarity). Interacts with histones H4, H3.3, H3.2 and H3.1, but not with CENPA or the testis-specific histone H3.1t (By similarity). Interacts (via J domain) with HSPA1A, HSPA1B and HSPA8 (By similarity). May interact with TONSL; the interaction seems to be histone-dependent (By similarity). May interact with HSPA8 and BAG2; the interactions seem to be histone-dependent (By similarity).</text>
</comment>
<comment type="subcellular location">
    <subcellularLocation>
        <location evidence="1">Nucleus</location>
    </subcellularLocation>
    <subcellularLocation>
        <location evidence="1">Cytoplasm</location>
    </subcellularLocation>
    <subcellularLocation>
        <location evidence="1">Cell membrane</location>
    </subcellularLocation>
    <text evidence="1">Predominantly nuclear. Translocates to the cytoplasm and membrane after heat shock.</text>
</comment>
<comment type="domain">
    <text evidence="1">The functional J domain is required for the release from histone-dependent chromatin-binding.</text>
</comment>
<evidence type="ECO:0000250" key="1">
    <source>
        <dbReference type="UniProtKB" id="Q8WXX5"/>
    </source>
</evidence>
<evidence type="ECO:0000255" key="2">
    <source>
        <dbReference type="PROSITE-ProRule" id="PRU00286"/>
    </source>
</evidence>
<evidence type="ECO:0007744" key="3">
    <source>
    </source>
</evidence>
<protein>
    <recommendedName>
        <fullName>DnaJ homolog subfamily C member 9</fullName>
    </recommendedName>
</protein>
<sequence>MGLLELCEQVFGTADLYQVLGVRREASDGEVRRGYHKVSLQVHPDRVEEDQKEDATRRFQILGRVYAVLSDKEQKAVYDEQGTVDEDSAGLNQDRDWDAYWRLLFKKISLEDIQAFEKTYKGSEEELNDIKQAYLDFKGDMDQIMESVLCVQYTDEPRIRNIIQKAIESKEIPAYSAFVKESKQKMNARKRRAQEEAKEAELSRKELGLEEGVDNLKALIQSRQKDRQKEMDSFLAQMEAKYCKPSKGGKRTALKKEKK</sequence>
<gene>
    <name type="primary">Dnajc9</name>
</gene>